<organism>
    <name type="scientific">Haemophilus influenzae (strain PittGG)</name>
    <dbReference type="NCBI Taxonomy" id="374931"/>
    <lineage>
        <taxon>Bacteria</taxon>
        <taxon>Pseudomonadati</taxon>
        <taxon>Pseudomonadota</taxon>
        <taxon>Gammaproteobacteria</taxon>
        <taxon>Pasteurellales</taxon>
        <taxon>Pasteurellaceae</taxon>
        <taxon>Haemophilus</taxon>
    </lineage>
</organism>
<protein>
    <recommendedName>
        <fullName evidence="1">Protein translocase subunit SecA</fullName>
        <ecNumber evidence="1">7.4.2.8</ecNumber>
    </recommendedName>
</protein>
<evidence type="ECO:0000255" key="1">
    <source>
        <dbReference type="HAMAP-Rule" id="MF_01382"/>
    </source>
</evidence>
<evidence type="ECO:0000256" key="2">
    <source>
        <dbReference type="SAM" id="MobiDB-lite"/>
    </source>
</evidence>
<reference key="1">
    <citation type="journal article" date="2007" name="Genome Biol.">
        <title>Characterization and modeling of the Haemophilus influenzae core and supragenomes based on the complete genomic sequences of Rd and 12 clinical nontypeable strains.</title>
        <authorList>
            <person name="Hogg J.S."/>
            <person name="Hu F.Z."/>
            <person name="Janto B."/>
            <person name="Boissy R."/>
            <person name="Hayes J."/>
            <person name="Keefe R."/>
            <person name="Post J.C."/>
            <person name="Ehrlich G.D."/>
        </authorList>
    </citation>
    <scope>NUCLEOTIDE SEQUENCE [LARGE SCALE GENOMIC DNA]</scope>
    <source>
        <strain>PittGG</strain>
    </source>
</reference>
<feature type="chain" id="PRO_1000073474" description="Protein translocase subunit SecA">
    <location>
        <begin position="1"/>
        <end position="901"/>
    </location>
</feature>
<feature type="region of interest" description="Disordered" evidence="2">
    <location>
        <begin position="847"/>
        <end position="901"/>
    </location>
</feature>
<feature type="compositionally biased region" description="Polar residues" evidence="2">
    <location>
        <begin position="848"/>
        <end position="866"/>
    </location>
</feature>
<feature type="compositionally biased region" description="Basic residues" evidence="2">
    <location>
        <begin position="888"/>
        <end position="901"/>
    </location>
</feature>
<feature type="binding site" evidence="1">
    <location>
        <position position="85"/>
    </location>
    <ligand>
        <name>ATP</name>
        <dbReference type="ChEBI" id="CHEBI:30616"/>
    </ligand>
</feature>
<feature type="binding site" evidence="1">
    <location>
        <begin position="103"/>
        <end position="107"/>
    </location>
    <ligand>
        <name>ATP</name>
        <dbReference type="ChEBI" id="CHEBI:30616"/>
    </ligand>
</feature>
<feature type="binding site" evidence="1">
    <location>
        <position position="510"/>
    </location>
    <ligand>
        <name>ATP</name>
        <dbReference type="ChEBI" id="CHEBI:30616"/>
    </ligand>
</feature>
<feature type="binding site" evidence="1">
    <location>
        <position position="882"/>
    </location>
    <ligand>
        <name>Zn(2+)</name>
        <dbReference type="ChEBI" id="CHEBI:29105"/>
    </ligand>
</feature>
<feature type="binding site" evidence="1">
    <location>
        <position position="884"/>
    </location>
    <ligand>
        <name>Zn(2+)</name>
        <dbReference type="ChEBI" id="CHEBI:29105"/>
    </ligand>
</feature>
<feature type="binding site" evidence="1">
    <location>
        <position position="893"/>
    </location>
    <ligand>
        <name>Zn(2+)</name>
        <dbReference type="ChEBI" id="CHEBI:29105"/>
    </ligand>
</feature>
<feature type="binding site" evidence="1">
    <location>
        <position position="894"/>
    </location>
    <ligand>
        <name>Zn(2+)</name>
        <dbReference type="ChEBI" id="CHEBI:29105"/>
    </ligand>
</feature>
<sequence>MSILTRIFGSRNERVLRKLKKQVVKINKMEPAFEALSDDELKAKTQEFRDRLSGGETLQQILPEAFATVREASKRVLGMRHFDVQLIGGMVLTNRCIAEMRTGEGKTLTATLPCYLIALEGKGVHVVTVNDYLARRDAETNRPLFEFLGMSVGVNIPGLSPEEKREAYAADITYATNSELGFDYLRDNLAHSKEERFQRTLGYALVDEVDSILIDEARTPLIISGQAEKSSELYIAVNKLIPSLIKQEKEDTEEYQGEGDFTLDLKSKQAHLTERGQEKVEDWLIAQGLMPEGDSLYSPSRIVLLHHVMAALRAHTLFEKDVDYIVKDGEIVIVDEHTGRTMAGRRWSDGLHQAIEAKEGVDIKSENQTVASISYQNYFRLYERLAGMTGTADTEAFEFQQIYGLETVVIPTNRPMIRDDRTDVMFENEQYKFNAIIEDIKDCVERQQPVLVGTISVEKSEELSKALDKAGIKHNVLNAKFHQQEAEIVAEAGFPSAVTIATNMAGRGTDIILGGNWKAQAAKLENPTQEQIEALKAEWEKNHEIVMKAGGLHIIGTERHESRRIDNQLRGRSGRQGDPGSSRFYLSLEDGLMRIYLNEGKRNLMRKAFTVAGEAMESKMLAKVIASAQAKVEAFHFDGRKNLLEYDDVANDQRHAIYEQRNYLLDNDDISETINAIRHDVFNGVIDQYIPPQSLEEQWDIKGLEERLSQEFGMELPISNWLEEDNNLHEESLRERIVEIAEKEYKEKEALVGEDAMHHFEKGVMLQTLDELWKEHLASMDYLRQGIHLRGYAQKDPKQEYKKESFRMFTEMLDSLKHHVIMTLTRVRVRTQEEMEEAELARQEMATRINQNNLPVDENSQTTQNSETEDYSDRRIGRNEPCPCGSGKKYKHCHGSRVARQ</sequence>
<dbReference type="EC" id="7.4.2.8" evidence="1"/>
<dbReference type="EMBL" id="CP000672">
    <property type="protein sequence ID" value="ABR00457.1"/>
    <property type="molecule type" value="Genomic_DNA"/>
</dbReference>
<dbReference type="SMR" id="A5UI51"/>
<dbReference type="KEGG" id="hiq:CGSHiGG_08105"/>
<dbReference type="HOGENOM" id="CLU_005314_3_0_6"/>
<dbReference type="Proteomes" id="UP000001990">
    <property type="component" value="Chromosome"/>
</dbReference>
<dbReference type="GO" id="GO:0031522">
    <property type="term" value="C:cell envelope Sec protein transport complex"/>
    <property type="evidence" value="ECO:0007669"/>
    <property type="project" value="TreeGrafter"/>
</dbReference>
<dbReference type="GO" id="GO:0005829">
    <property type="term" value="C:cytosol"/>
    <property type="evidence" value="ECO:0007669"/>
    <property type="project" value="TreeGrafter"/>
</dbReference>
<dbReference type="GO" id="GO:0005886">
    <property type="term" value="C:plasma membrane"/>
    <property type="evidence" value="ECO:0007669"/>
    <property type="project" value="UniProtKB-SubCell"/>
</dbReference>
<dbReference type="GO" id="GO:0005524">
    <property type="term" value="F:ATP binding"/>
    <property type="evidence" value="ECO:0007669"/>
    <property type="project" value="UniProtKB-UniRule"/>
</dbReference>
<dbReference type="GO" id="GO:0046872">
    <property type="term" value="F:metal ion binding"/>
    <property type="evidence" value="ECO:0007669"/>
    <property type="project" value="UniProtKB-KW"/>
</dbReference>
<dbReference type="GO" id="GO:0008564">
    <property type="term" value="F:protein-exporting ATPase activity"/>
    <property type="evidence" value="ECO:0007669"/>
    <property type="project" value="UniProtKB-EC"/>
</dbReference>
<dbReference type="GO" id="GO:0065002">
    <property type="term" value="P:intracellular protein transmembrane transport"/>
    <property type="evidence" value="ECO:0007669"/>
    <property type="project" value="UniProtKB-UniRule"/>
</dbReference>
<dbReference type="GO" id="GO:0017038">
    <property type="term" value="P:protein import"/>
    <property type="evidence" value="ECO:0007669"/>
    <property type="project" value="InterPro"/>
</dbReference>
<dbReference type="GO" id="GO:0006605">
    <property type="term" value="P:protein targeting"/>
    <property type="evidence" value="ECO:0007669"/>
    <property type="project" value="UniProtKB-UniRule"/>
</dbReference>
<dbReference type="GO" id="GO:0043952">
    <property type="term" value="P:protein transport by the Sec complex"/>
    <property type="evidence" value="ECO:0007669"/>
    <property type="project" value="TreeGrafter"/>
</dbReference>
<dbReference type="CDD" id="cd17928">
    <property type="entry name" value="DEXDc_SecA"/>
    <property type="match status" value="1"/>
</dbReference>
<dbReference type="CDD" id="cd18803">
    <property type="entry name" value="SF2_C_secA"/>
    <property type="match status" value="1"/>
</dbReference>
<dbReference type="FunFam" id="1.10.3060.10:FF:000001">
    <property type="entry name" value="Preprotein translocase subunit SecA"/>
    <property type="match status" value="1"/>
</dbReference>
<dbReference type="FunFam" id="3.40.50.300:FF:000113">
    <property type="entry name" value="Preprotein translocase subunit SecA"/>
    <property type="match status" value="1"/>
</dbReference>
<dbReference type="FunFam" id="3.90.1440.10:FF:000001">
    <property type="entry name" value="Preprotein translocase subunit SecA"/>
    <property type="match status" value="1"/>
</dbReference>
<dbReference type="Gene3D" id="1.10.3060.10">
    <property type="entry name" value="Helical scaffold and wing domains of SecA"/>
    <property type="match status" value="1"/>
</dbReference>
<dbReference type="Gene3D" id="3.40.50.300">
    <property type="entry name" value="P-loop containing nucleotide triphosphate hydrolases"/>
    <property type="match status" value="2"/>
</dbReference>
<dbReference type="Gene3D" id="3.90.1440.10">
    <property type="entry name" value="SecA, preprotein cross-linking domain"/>
    <property type="match status" value="1"/>
</dbReference>
<dbReference type="HAMAP" id="MF_01382">
    <property type="entry name" value="SecA"/>
    <property type="match status" value="1"/>
</dbReference>
<dbReference type="InterPro" id="IPR014001">
    <property type="entry name" value="Helicase_ATP-bd"/>
</dbReference>
<dbReference type="InterPro" id="IPR001650">
    <property type="entry name" value="Helicase_C-like"/>
</dbReference>
<dbReference type="InterPro" id="IPR027417">
    <property type="entry name" value="P-loop_NTPase"/>
</dbReference>
<dbReference type="InterPro" id="IPR004027">
    <property type="entry name" value="SEC_C_motif"/>
</dbReference>
<dbReference type="InterPro" id="IPR000185">
    <property type="entry name" value="SecA"/>
</dbReference>
<dbReference type="InterPro" id="IPR020937">
    <property type="entry name" value="SecA_CS"/>
</dbReference>
<dbReference type="InterPro" id="IPR011115">
    <property type="entry name" value="SecA_DEAD"/>
</dbReference>
<dbReference type="InterPro" id="IPR014018">
    <property type="entry name" value="SecA_motor_DEAD"/>
</dbReference>
<dbReference type="InterPro" id="IPR011130">
    <property type="entry name" value="SecA_preprotein_X-link_dom"/>
</dbReference>
<dbReference type="InterPro" id="IPR044722">
    <property type="entry name" value="SecA_SF2_C"/>
</dbReference>
<dbReference type="InterPro" id="IPR011116">
    <property type="entry name" value="SecA_Wing/Scaffold"/>
</dbReference>
<dbReference type="InterPro" id="IPR036266">
    <property type="entry name" value="SecA_Wing/Scaffold_sf"/>
</dbReference>
<dbReference type="InterPro" id="IPR036670">
    <property type="entry name" value="SecA_X-link_sf"/>
</dbReference>
<dbReference type="NCBIfam" id="NF009538">
    <property type="entry name" value="PRK12904.1"/>
    <property type="match status" value="1"/>
</dbReference>
<dbReference type="NCBIfam" id="TIGR00963">
    <property type="entry name" value="secA"/>
    <property type="match status" value="1"/>
</dbReference>
<dbReference type="PANTHER" id="PTHR30612:SF0">
    <property type="entry name" value="CHLOROPLAST PROTEIN-TRANSPORTING ATPASE"/>
    <property type="match status" value="1"/>
</dbReference>
<dbReference type="PANTHER" id="PTHR30612">
    <property type="entry name" value="SECA INNER MEMBRANE COMPONENT OF SEC PROTEIN SECRETION SYSTEM"/>
    <property type="match status" value="1"/>
</dbReference>
<dbReference type="Pfam" id="PF21090">
    <property type="entry name" value="P-loop_SecA"/>
    <property type="match status" value="1"/>
</dbReference>
<dbReference type="Pfam" id="PF02810">
    <property type="entry name" value="SEC-C"/>
    <property type="match status" value="1"/>
</dbReference>
<dbReference type="Pfam" id="PF07517">
    <property type="entry name" value="SecA_DEAD"/>
    <property type="match status" value="1"/>
</dbReference>
<dbReference type="Pfam" id="PF01043">
    <property type="entry name" value="SecA_PP_bind"/>
    <property type="match status" value="1"/>
</dbReference>
<dbReference type="Pfam" id="PF07516">
    <property type="entry name" value="SecA_SW"/>
    <property type="match status" value="1"/>
</dbReference>
<dbReference type="PRINTS" id="PR00906">
    <property type="entry name" value="SECA"/>
</dbReference>
<dbReference type="SMART" id="SM00957">
    <property type="entry name" value="SecA_DEAD"/>
    <property type="match status" value="1"/>
</dbReference>
<dbReference type="SMART" id="SM00958">
    <property type="entry name" value="SecA_PP_bind"/>
    <property type="match status" value="1"/>
</dbReference>
<dbReference type="SUPFAM" id="SSF81886">
    <property type="entry name" value="Helical scaffold and wing domains of SecA"/>
    <property type="match status" value="1"/>
</dbReference>
<dbReference type="SUPFAM" id="SSF52540">
    <property type="entry name" value="P-loop containing nucleoside triphosphate hydrolases"/>
    <property type="match status" value="2"/>
</dbReference>
<dbReference type="SUPFAM" id="SSF81767">
    <property type="entry name" value="Pre-protein crosslinking domain of SecA"/>
    <property type="match status" value="1"/>
</dbReference>
<dbReference type="PROSITE" id="PS01312">
    <property type="entry name" value="SECA"/>
    <property type="match status" value="1"/>
</dbReference>
<dbReference type="PROSITE" id="PS51196">
    <property type="entry name" value="SECA_MOTOR_DEAD"/>
    <property type="match status" value="1"/>
</dbReference>
<name>SECA_HAEIG</name>
<keyword id="KW-0067">ATP-binding</keyword>
<keyword id="KW-0997">Cell inner membrane</keyword>
<keyword id="KW-1003">Cell membrane</keyword>
<keyword id="KW-0963">Cytoplasm</keyword>
<keyword id="KW-0472">Membrane</keyword>
<keyword id="KW-0479">Metal-binding</keyword>
<keyword id="KW-0547">Nucleotide-binding</keyword>
<keyword id="KW-0653">Protein transport</keyword>
<keyword id="KW-1278">Translocase</keyword>
<keyword id="KW-0811">Translocation</keyword>
<keyword id="KW-0813">Transport</keyword>
<keyword id="KW-0862">Zinc</keyword>
<comment type="function">
    <text evidence="1">Part of the Sec protein translocase complex. Interacts with the SecYEG preprotein conducting channel. Has a central role in coupling the hydrolysis of ATP to the transfer of proteins into and across the cell membrane, serving both as a receptor for the preprotein-SecB complex and as an ATP-driven molecular motor driving the stepwise translocation of polypeptide chains across the membrane.</text>
</comment>
<comment type="catalytic activity">
    <reaction evidence="1">
        <text>ATP + H2O + cellular proteinSide 1 = ADP + phosphate + cellular proteinSide 2.</text>
        <dbReference type="EC" id="7.4.2.8"/>
    </reaction>
</comment>
<comment type="cofactor">
    <cofactor evidence="1">
        <name>Zn(2+)</name>
        <dbReference type="ChEBI" id="CHEBI:29105"/>
    </cofactor>
    <text evidence="1">May bind 1 zinc ion per subunit.</text>
</comment>
<comment type="subunit">
    <text evidence="1">Monomer and homodimer. Part of the essential Sec protein translocation apparatus which comprises SecA, SecYEG and auxiliary proteins SecDF-YajC and YidC.</text>
</comment>
<comment type="subcellular location">
    <subcellularLocation>
        <location evidence="1">Cell inner membrane</location>
        <topology evidence="1">Peripheral membrane protein</topology>
        <orientation evidence="1">Cytoplasmic side</orientation>
    </subcellularLocation>
    <subcellularLocation>
        <location evidence="1">Cytoplasm</location>
    </subcellularLocation>
    <text evidence="1">Distribution is 50-50.</text>
</comment>
<comment type="similarity">
    <text evidence="1">Belongs to the SecA family.</text>
</comment>
<proteinExistence type="inferred from homology"/>
<accession>A5UI51</accession>
<gene>
    <name evidence="1" type="primary">secA</name>
    <name type="ordered locus">CGSHiGG_08105</name>
</gene>